<organism>
    <name type="scientific">Acanthamoeba polyphaga mimivirus</name>
    <name type="common">APMV</name>
    <dbReference type="NCBI Taxonomy" id="212035"/>
    <lineage>
        <taxon>Viruses</taxon>
        <taxon>Varidnaviria</taxon>
        <taxon>Bamfordvirae</taxon>
        <taxon>Nucleocytoviricota</taxon>
        <taxon>Megaviricetes</taxon>
        <taxon>Imitervirales</taxon>
        <taxon>Mimiviridae</taxon>
        <taxon>Megamimivirinae</taxon>
        <taxon>Mimivirus</taxon>
        <taxon>Mimivirus bradfordmassiliense</taxon>
    </lineage>
</organism>
<proteinExistence type="predicted"/>
<reference key="1">
    <citation type="journal article" date="2004" name="Science">
        <title>The 1.2-megabase genome sequence of Mimivirus.</title>
        <authorList>
            <person name="Raoult D."/>
            <person name="Audic S."/>
            <person name="Robert C."/>
            <person name="Abergel C."/>
            <person name="Renesto P."/>
            <person name="Ogata H."/>
            <person name="La Scola B."/>
            <person name="Susan M."/>
            <person name="Claverie J.-M."/>
        </authorList>
    </citation>
    <scope>NUCLEOTIDE SEQUENCE [LARGE SCALE GENOMIC DNA]</scope>
    <source>
        <strain>Rowbotham-Bradford</strain>
    </source>
</reference>
<feature type="chain" id="PRO_0000067157" description="Putative ankyrin repeat protein L112">
    <location>
        <begin position="1"/>
        <end position="457"/>
    </location>
</feature>
<feature type="repeat" description="ANK 1">
    <location>
        <begin position="62"/>
        <end position="91"/>
    </location>
</feature>
<feature type="repeat" description="ANK 2">
    <location>
        <begin position="104"/>
        <end position="132"/>
    </location>
</feature>
<feature type="repeat" description="ANK 3">
    <location>
        <begin position="133"/>
        <end position="162"/>
    </location>
</feature>
<feature type="repeat" description="ANK 4">
    <location>
        <begin position="193"/>
        <end position="219"/>
    </location>
</feature>
<feature type="repeat" description="ANK 5">
    <location>
        <begin position="220"/>
        <end position="249"/>
    </location>
</feature>
<feature type="repeat" description="ANK 6">
    <location>
        <begin position="251"/>
        <end position="279"/>
    </location>
</feature>
<feature type="repeat" description="ANK 7">
    <location>
        <begin position="281"/>
        <end position="309"/>
    </location>
</feature>
<feature type="repeat" description="ANK 8">
    <location>
        <begin position="310"/>
        <end position="339"/>
    </location>
</feature>
<feature type="repeat" description="ANK 9">
    <location>
        <begin position="341"/>
        <end position="368"/>
    </location>
</feature>
<feature type="repeat" description="ANK 10">
    <location>
        <begin position="400"/>
        <end position="429"/>
    </location>
</feature>
<feature type="repeat" description="ANK 11">
    <location>
        <begin position="431"/>
        <end position="457"/>
    </location>
</feature>
<name>YL112_MIMIV</name>
<accession>Q5UPI6</accession>
<sequence length="457" mass="51942">MDITYDDLPVEIWIRILKFMKDSAVNLVLVNTDFFKLIYFKKNKFYELKEFNFGMQKNYVKQRITLINYVVEKGYLDIIVYINNLKSNHNPLIIDNIKILGSISKDTALWYSCKNNNLATTKYFINKGASINSSSLPLKTACIEGHLDTVKYLFSCGIEIINSIYDCIVSACCYGRLNIVIYLSNKISIPGDYINEAFVMACKYGYLDIAKYLFNLDCSITVDALYGACINGHIEVVEYLIGLGVDPRKEKCWAITSACQGGHLNIIEFLLSLGIKPKEINVDAFYHACKTGNLEIAKYLKEIGADTITRRDWALELSARGGYLDVVKYIIELGVSQKSLNKALIDATLFCRVEVVEYLVDSGSDFRQNDDYLFRSIICTRDYVEMAEYFIMKGVNIIVNNNEPIKTVCHNGCIGILKLLIMYGVDYNPIKDQLINIAKSNNQSAIIKYLEDLDTLK</sequence>
<protein>
    <recommendedName>
        <fullName>Putative ankyrin repeat protein L112</fullName>
    </recommendedName>
</protein>
<keyword id="KW-0040">ANK repeat</keyword>
<keyword id="KW-1185">Reference proteome</keyword>
<keyword id="KW-0677">Repeat</keyword>
<gene>
    <name type="ordered locus">MIMI_L112</name>
</gene>
<dbReference type="EMBL" id="AY653733">
    <property type="protein sequence ID" value="AAV50387.1"/>
    <property type="molecule type" value="Genomic_DNA"/>
</dbReference>
<dbReference type="SMR" id="Q5UPI6"/>
<dbReference type="KEGG" id="vg:9924710"/>
<dbReference type="OrthoDB" id="38654at10239"/>
<dbReference type="Proteomes" id="UP000001134">
    <property type="component" value="Genome"/>
</dbReference>
<dbReference type="Gene3D" id="1.25.40.20">
    <property type="entry name" value="Ankyrin repeat-containing domain"/>
    <property type="match status" value="2"/>
</dbReference>
<dbReference type="InterPro" id="IPR002110">
    <property type="entry name" value="Ankyrin_rpt"/>
</dbReference>
<dbReference type="InterPro" id="IPR036770">
    <property type="entry name" value="Ankyrin_rpt-contain_sf"/>
</dbReference>
<dbReference type="PANTHER" id="PTHR24188">
    <property type="entry name" value="ANKYRIN REPEAT PROTEIN"/>
    <property type="match status" value="1"/>
</dbReference>
<dbReference type="PANTHER" id="PTHR24188:SF29">
    <property type="entry name" value="GH09064P"/>
    <property type="match status" value="1"/>
</dbReference>
<dbReference type="Pfam" id="PF12796">
    <property type="entry name" value="Ank_2"/>
    <property type="match status" value="2"/>
</dbReference>
<dbReference type="SMART" id="SM00248">
    <property type="entry name" value="ANK"/>
    <property type="match status" value="9"/>
</dbReference>
<dbReference type="SUPFAM" id="SSF48403">
    <property type="entry name" value="Ankyrin repeat"/>
    <property type="match status" value="1"/>
</dbReference>
<organismHost>
    <name type="scientific">Acanthamoeba polyphaga</name>
    <name type="common">Amoeba</name>
    <dbReference type="NCBI Taxonomy" id="5757"/>
</organismHost>